<protein>
    <recommendedName>
        <fullName evidence="1">Aspartate carbamoyltransferase regulatory chain</fullName>
    </recommendedName>
</protein>
<proteinExistence type="inferred from homology"/>
<sequence length="154" mass="17483">MSEKNQLQVEAIRHGSVIDHVPAGQGIKILKLFQLIETQERITVGFNLKSGALGKKDLIKIENTRLTEQQANQLALFAPKATVNIIEDFAVVKKHQLELPEFIAGVFHCPNSNCISHNEPVDSYFRVREVKGVVRMKCKYCEKSFTQDIVSERY</sequence>
<name>PYRI_AERHH</name>
<accession>A0KQG1</accession>
<comment type="function">
    <text evidence="1">Involved in allosteric regulation of aspartate carbamoyltransferase.</text>
</comment>
<comment type="cofactor">
    <cofactor evidence="1">
        <name>Zn(2+)</name>
        <dbReference type="ChEBI" id="CHEBI:29105"/>
    </cofactor>
    <text evidence="1">Binds 1 zinc ion per subunit.</text>
</comment>
<comment type="subunit">
    <text evidence="1">Contains catalytic and regulatory chains.</text>
</comment>
<comment type="similarity">
    <text evidence="1">Belongs to the PyrI family.</text>
</comment>
<dbReference type="EMBL" id="CP000462">
    <property type="protein sequence ID" value="ABK37347.1"/>
    <property type="molecule type" value="Genomic_DNA"/>
</dbReference>
<dbReference type="RefSeq" id="WP_011707750.1">
    <property type="nucleotide sequence ID" value="NC_008570.1"/>
</dbReference>
<dbReference type="RefSeq" id="YP_858512.1">
    <property type="nucleotide sequence ID" value="NC_008570.1"/>
</dbReference>
<dbReference type="SMR" id="A0KQG1"/>
<dbReference type="STRING" id="380703.AHA_4088"/>
<dbReference type="EnsemblBacteria" id="ABK37347">
    <property type="protein sequence ID" value="ABK37347"/>
    <property type="gene ID" value="AHA_4088"/>
</dbReference>
<dbReference type="GeneID" id="4490230"/>
<dbReference type="KEGG" id="aha:AHA_4088"/>
<dbReference type="PATRIC" id="fig|380703.7.peg.4044"/>
<dbReference type="eggNOG" id="COG1781">
    <property type="taxonomic scope" value="Bacteria"/>
</dbReference>
<dbReference type="HOGENOM" id="CLU_128576_0_0_6"/>
<dbReference type="OrthoDB" id="5599321at2"/>
<dbReference type="Proteomes" id="UP000000756">
    <property type="component" value="Chromosome"/>
</dbReference>
<dbReference type="GO" id="GO:0009347">
    <property type="term" value="C:aspartate carbamoyltransferase complex"/>
    <property type="evidence" value="ECO:0007669"/>
    <property type="project" value="InterPro"/>
</dbReference>
<dbReference type="GO" id="GO:0046872">
    <property type="term" value="F:metal ion binding"/>
    <property type="evidence" value="ECO:0007669"/>
    <property type="project" value="UniProtKB-KW"/>
</dbReference>
<dbReference type="GO" id="GO:0006207">
    <property type="term" value="P:'de novo' pyrimidine nucleobase biosynthetic process"/>
    <property type="evidence" value="ECO:0007669"/>
    <property type="project" value="InterPro"/>
</dbReference>
<dbReference type="GO" id="GO:0006221">
    <property type="term" value="P:pyrimidine nucleotide biosynthetic process"/>
    <property type="evidence" value="ECO:0007669"/>
    <property type="project" value="UniProtKB-UniRule"/>
</dbReference>
<dbReference type="Gene3D" id="2.30.30.20">
    <property type="entry name" value="Aspartate carbamoyltransferase regulatory subunit, C-terminal domain"/>
    <property type="match status" value="1"/>
</dbReference>
<dbReference type="Gene3D" id="3.30.70.140">
    <property type="entry name" value="Aspartate carbamoyltransferase regulatory subunit, N-terminal domain"/>
    <property type="match status" value="1"/>
</dbReference>
<dbReference type="HAMAP" id="MF_00002">
    <property type="entry name" value="Asp_carb_tr_reg"/>
    <property type="match status" value="1"/>
</dbReference>
<dbReference type="InterPro" id="IPR020545">
    <property type="entry name" value="Asp_carbamoyltransf_reg_N"/>
</dbReference>
<dbReference type="InterPro" id="IPR002801">
    <property type="entry name" value="Asp_carbamoylTrfase_reg"/>
</dbReference>
<dbReference type="InterPro" id="IPR020542">
    <property type="entry name" value="Asp_carbamoyltrfase_reg_C"/>
</dbReference>
<dbReference type="InterPro" id="IPR036792">
    <property type="entry name" value="Asp_carbatrfase_reg_C_sf"/>
</dbReference>
<dbReference type="InterPro" id="IPR036793">
    <property type="entry name" value="Asp_carbatrfase_reg_N_sf"/>
</dbReference>
<dbReference type="NCBIfam" id="TIGR00240">
    <property type="entry name" value="ATCase_reg"/>
    <property type="match status" value="1"/>
</dbReference>
<dbReference type="PANTHER" id="PTHR35805">
    <property type="entry name" value="ASPARTATE CARBAMOYLTRANSFERASE REGULATORY CHAIN"/>
    <property type="match status" value="1"/>
</dbReference>
<dbReference type="PANTHER" id="PTHR35805:SF1">
    <property type="entry name" value="ASPARTATE CARBAMOYLTRANSFERASE REGULATORY CHAIN"/>
    <property type="match status" value="1"/>
</dbReference>
<dbReference type="Pfam" id="PF01948">
    <property type="entry name" value="PyrI"/>
    <property type="match status" value="1"/>
</dbReference>
<dbReference type="Pfam" id="PF02748">
    <property type="entry name" value="PyrI_C"/>
    <property type="match status" value="1"/>
</dbReference>
<dbReference type="SUPFAM" id="SSF57825">
    <property type="entry name" value="Aspartate carbamoyltransferase, Regulatory-chain, C-terminal domain"/>
    <property type="match status" value="1"/>
</dbReference>
<dbReference type="SUPFAM" id="SSF54893">
    <property type="entry name" value="Aspartate carbamoyltransferase, Regulatory-chain, N-terminal domain"/>
    <property type="match status" value="1"/>
</dbReference>
<gene>
    <name evidence="1" type="primary">pyrI</name>
    <name type="ordered locus">AHA_4088</name>
</gene>
<organism>
    <name type="scientific">Aeromonas hydrophila subsp. hydrophila (strain ATCC 7966 / DSM 30187 / BCRC 13018 / CCUG 14551 / JCM 1027 / KCTC 2358 / NCIMB 9240 / NCTC 8049)</name>
    <dbReference type="NCBI Taxonomy" id="380703"/>
    <lineage>
        <taxon>Bacteria</taxon>
        <taxon>Pseudomonadati</taxon>
        <taxon>Pseudomonadota</taxon>
        <taxon>Gammaproteobacteria</taxon>
        <taxon>Aeromonadales</taxon>
        <taxon>Aeromonadaceae</taxon>
        <taxon>Aeromonas</taxon>
    </lineage>
</organism>
<reference key="1">
    <citation type="journal article" date="2006" name="J. Bacteriol.">
        <title>Genome sequence of Aeromonas hydrophila ATCC 7966T: jack of all trades.</title>
        <authorList>
            <person name="Seshadri R."/>
            <person name="Joseph S.W."/>
            <person name="Chopra A.K."/>
            <person name="Sha J."/>
            <person name="Shaw J."/>
            <person name="Graf J."/>
            <person name="Haft D.H."/>
            <person name="Wu M."/>
            <person name="Ren Q."/>
            <person name="Rosovitz M.J."/>
            <person name="Madupu R."/>
            <person name="Tallon L."/>
            <person name="Kim M."/>
            <person name="Jin S."/>
            <person name="Vuong H."/>
            <person name="Stine O.C."/>
            <person name="Ali A."/>
            <person name="Horneman A.J."/>
            <person name="Heidelberg J.F."/>
        </authorList>
    </citation>
    <scope>NUCLEOTIDE SEQUENCE [LARGE SCALE GENOMIC DNA]</scope>
    <source>
        <strain>ATCC 7966 / DSM 30187 / BCRC 13018 / CCUG 14551 / JCM 1027 / KCTC 2358 / NCIMB 9240 / NCTC 8049</strain>
    </source>
</reference>
<feature type="chain" id="PRO_1000000024" description="Aspartate carbamoyltransferase regulatory chain">
    <location>
        <begin position="1"/>
        <end position="154"/>
    </location>
</feature>
<feature type="binding site" evidence="1">
    <location>
        <position position="109"/>
    </location>
    <ligand>
        <name>Zn(2+)</name>
        <dbReference type="ChEBI" id="CHEBI:29105"/>
    </ligand>
</feature>
<feature type="binding site" evidence="1">
    <location>
        <position position="114"/>
    </location>
    <ligand>
        <name>Zn(2+)</name>
        <dbReference type="ChEBI" id="CHEBI:29105"/>
    </ligand>
</feature>
<feature type="binding site" evidence="1">
    <location>
        <position position="138"/>
    </location>
    <ligand>
        <name>Zn(2+)</name>
        <dbReference type="ChEBI" id="CHEBI:29105"/>
    </ligand>
</feature>
<feature type="binding site" evidence="1">
    <location>
        <position position="141"/>
    </location>
    <ligand>
        <name>Zn(2+)</name>
        <dbReference type="ChEBI" id="CHEBI:29105"/>
    </ligand>
</feature>
<keyword id="KW-0479">Metal-binding</keyword>
<keyword id="KW-0665">Pyrimidine biosynthesis</keyword>
<keyword id="KW-1185">Reference proteome</keyword>
<keyword id="KW-0862">Zinc</keyword>
<evidence type="ECO:0000255" key="1">
    <source>
        <dbReference type="HAMAP-Rule" id="MF_00002"/>
    </source>
</evidence>